<comment type="function">
    <text evidence="8 9 10">Monomeric heme protein which primary function is to store oxygen and facilitate its diffusion within muscle tissues. Reversibly binds oxygen through a pentacoordinated heme iron and enables its timely and efficient release as needed during periods of heightened demand (PubMed:30918256, PubMed:34679218). Depending on the oxidative conditions of tissues and cells, and in addition to its ability to bind oxygen, it also has a nitrite reductase activity whereby it regulates the production of bioactive nitric oxide (PubMed:32891753). Under stress conditions, like hypoxia and anoxia, it also protects cells against reactive oxygen species thanks to its pseudoperoxidase activity (PubMed:34679218).</text>
</comment>
<comment type="catalytic activity">
    <reaction evidence="9">
        <text>Fe(III)-heme b-[protein] + nitric oxide + H2O = Fe(II)-heme b-[protein] + nitrite + 2 H(+)</text>
        <dbReference type="Rhea" id="RHEA:77711"/>
        <dbReference type="Rhea" id="RHEA-COMP:18975"/>
        <dbReference type="Rhea" id="RHEA-COMP:18976"/>
        <dbReference type="ChEBI" id="CHEBI:15377"/>
        <dbReference type="ChEBI" id="CHEBI:15378"/>
        <dbReference type="ChEBI" id="CHEBI:16301"/>
        <dbReference type="ChEBI" id="CHEBI:16480"/>
        <dbReference type="ChEBI" id="CHEBI:55376"/>
        <dbReference type="ChEBI" id="CHEBI:60344"/>
    </reaction>
    <physiologicalReaction direction="right-to-left" evidence="20">
        <dbReference type="Rhea" id="RHEA:77713"/>
    </physiologicalReaction>
</comment>
<comment type="catalytic activity">
    <reaction evidence="10">
        <text>H2O2 + AH2 = A + 2 H2O</text>
        <dbReference type="Rhea" id="RHEA:30275"/>
        <dbReference type="ChEBI" id="CHEBI:13193"/>
        <dbReference type="ChEBI" id="CHEBI:15377"/>
        <dbReference type="ChEBI" id="CHEBI:16240"/>
        <dbReference type="ChEBI" id="CHEBI:17499"/>
    </reaction>
</comment>
<comment type="biophysicochemical properties">
    <kinetics>
        <KM evidence="10">163 uM for H2O2</KM>
    </kinetics>
</comment>
<comment type="subunit">
    <text evidence="1">Monomeric.</text>
</comment>
<comment type="interaction">
    <interactant intactId="EBI-15106010">
        <id>P02144</id>
    </interactant>
    <interactant intactId="EBI-20824070">
        <id>O00230</id>
        <label>CORT</label>
    </interactant>
    <organismsDiffer>false</organismsDiffer>
    <experiments>2</experiments>
</comment>
<comment type="subcellular location">
    <subcellularLocation>
        <location evidence="8">Cytoplasm</location>
        <location evidence="8">Sarcoplasm</location>
    </subcellularLocation>
</comment>
<comment type="disease" evidence="8 10 11">
    <disease id="DI-06630">
        <name>Myopathy, sarcoplasmic body</name>
        <acronym>MYOSB</acronym>
        <description>An autosomal dominant, slowly progressive muscle disorder manifesting in adulthood with proximal and axial weakness that progresses to involve distal muscles. Patients may lose ambulation after a long disease course, and some individuals develop respiratory or cardiac symptoms. Muscle pathology features include sarcoplasmic bodies in skeletal and cardiac muscles.</description>
        <dbReference type="MIM" id="620286"/>
    </disease>
    <text>The disease is caused by variants affecting the gene represented in this entry.</text>
</comment>
<comment type="similarity">
    <text evidence="6">Belongs to the globin family.</text>
</comment>
<gene>
    <name evidence="22" type="primary">MB</name>
</gene>
<sequence>MGLSDGEWQLVLNVWGKVEADIPGHGQEVLIRLFKGHPETLEKFDKFKHLKSEDEMKASEDLKKHGATVLTALGGILKKKGHHEAEIKPLAQSHATKHKIPVKYLEFISECIIQVLQSKHPGDFGADAQGAMNKALELFRKDMASNYKELGFQG</sequence>
<evidence type="ECO:0000250" key="1">
    <source>
        <dbReference type="UniProtKB" id="P02185"/>
    </source>
</evidence>
<evidence type="ECO:0000250" key="2">
    <source>
        <dbReference type="UniProtKB" id="P02189"/>
    </source>
</evidence>
<evidence type="ECO:0000250" key="3">
    <source>
        <dbReference type="UniProtKB" id="P04247"/>
    </source>
</evidence>
<evidence type="ECO:0000250" key="4">
    <source>
        <dbReference type="UniProtKB" id="P68082"/>
    </source>
</evidence>
<evidence type="ECO:0000250" key="5">
    <source>
        <dbReference type="UniProtKB" id="Q9QZ76"/>
    </source>
</evidence>
<evidence type="ECO:0000255" key="6">
    <source>
        <dbReference type="PROSITE-ProRule" id="PRU00238"/>
    </source>
</evidence>
<evidence type="ECO:0000269" key="7">
    <source>
    </source>
</evidence>
<evidence type="ECO:0000269" key="8">
    <source>
    </source>
</evidence>
<evidence type="ECO:0000269" key="9">
    <source>
    </source>
</evidence>
<evidence type="ECO:0000269" key="10">
    <source>
    </source>
</evidence>
<evidence type="ECO:0000269" key="11">
    <source>
    </source>
</evidence>
<evidence type="ECO:0000269" key="12">
    <source>
    </source>
</evidence>
<evidence type="ECO:0000269" key="13">
    <source>
    </source>
</evidence>
<evidence type="ECO:0000269" key="14">
    <source>
    </source>
</evidence>
<evidence type="ECO:0000269" key="15">
    <source>
    </source>
</evidence>
<evidence type="ECO:0000269" key="16">
    <source>
    </source>
</evidence>
<evidence type="ECO:0000269" key="17">
    <source>
    </source>
</evidence>
<evidence type="ECO:0000303" key="18">
    <source>
    </source>
</evidence>
<evidence type="ECO:0000305" key="19"/>
<evidence type="ECO:0000305" key="20">
    <source>
    </source>
</evidence>
<evidence type="ECO:0000305" key="21">
    <source>
    </source>
</evidence>
<evidence type="ECO:0000312" key="22">
    <source>
        <dbReference type="HGNC" id="HGNC:6915"/>
    </source>
</evidence>
<evidence type="ECO:0007744" key="23">
    <source>
        <dbReference type="PDB" id="3RGK"/>
    </source>
</evidence>
<evidence type="ECO:0007829" key="24">
    <source>
        <dbReference type="PDB" id="3RGK"/>
    </source>
</evidence>
<reference key="1">
    <citation type="journal article" date="1984" name="EMBO J.">
        <title>Organization of the human myoglobin gene.</title>
        <authorList>
            <person name="Weller P."/>
            <person name="Jeffreys A.J."/>
            <person name="Wilson V."/>
            <person name="Blanchetot A."/>
        </authorList>
    </citation>
    <scope>NUCLEOTIDE SEQUENCE [GENOMIC DNA]</scope>
</reference>
<reference key="2">
    <citation type="journal article" date="1985" name="Gene">
        <title>Cloning of the human myoglobin gene.</title>
        <authorList>
            <person name="Akaboshi E."/>
        </authorList>
    </citation>
    <scope>NUCLEOTIDE SEQUENCE [GENOMIC DNA]</scope>
</reference>
<reference key="3">
    <citation type="journal article" date="2004" name="Genome Biol.">
        <title>A genome annotation-driven approach to cloning the human ORFeome.</title>
        <authorList>
            <person name="Collins J.E."/>
            <person name="Wright C.L."/>
            <person name="Edwards C.A."/>
            <person name="Davis M.P."/>
            <person name="Grinham J.A."/>
            <person name="Cole C.G."/>
            <person name="Goward M.E."/>
            <person name="Aguado B."/>
            <person name="Mallya M."/>
            <person name="Mokrab Y."/>
            <person name="Huckle E.J."/>
            <person name="Beare D.M."/>
            <person name="Dunham I."/>
        </authorList>
    </citation>
    <scope>NUCLEOTIDE SEQUENCE [LARGE SCALE MRNA]</scope>
</reference>
<reference key="4">
    <citation type="submission" date="2004-06" db="EMBL/GenBank/DDBJ databases">
        <title>Cloning of human full open reading frames in Gateway(TM) system entry vector (pDONR201).</title>
        <authorList>
            <person name="Ebert L."/>
            <person name="Schick M."/>
            <person name="Neubert P."/>
            <person name="Schatten R."/>
            <person name="Henze S."/>
            <person name="Korn B."/>
        </authorList>
    </citation>
    <scope>NUCLEOTIDE SEQUENCE [LARGE SCALE MRNA]</scope>
</reference>
<reference key="5">
    <citation type="submission" date="2005-04" db="EMBL/GenBank/DDBJ databases">
        <authorList>
            <consortium name="NIEHS SNPs program"/>
        </authorList>
    </citation>
    <scope>NUCLEOTIDE SEQUENCE [GENOMIC DNA]</scope>
</reference>
<reference key="6">
    <citation type="journal article" date="1999" name="Nature">
        <title>The DNA sequence of human chromosome 22.</title>
        <authorList>
            <person name="Dunham I."/>
            <person name="Hunt A.R."/>
            <person name="Collins J.E."/>
            <person name="Bruskiewich R."/>
            <person name="Beare D.M."/>
            <person name="Clamp M."/>
            <person name="Smink L.J."/>
            <person name="Ainscough R."/>
            <person name="Almeida J.P."/>
            <person name="Babbage A.K."/>
            <person name="Bagguley C."/>
            <person name="Bailey J."/>
            <person name="Barlow K.F."/>
            <person name="Bates K.N."/>
            <person name="Beasley O.P."/>
            <person name="Bird C.P."/>
            <person name="Blakey S.E."/>
            <person name="Bridgeman A.M."/>
            <person name="Buck D."/>
            <person name="Burgess J."/>
            <person name="Burrill W.D."/>
            <person name="Burton J."/>
            <person name="Carder C."/>
            <person name="Carter N.P."/>
            <person name="Chen Y."/>
            <person name="Clark G."/>
            <person name="Clegg S.M."/>
            <person name="Cobley V.E."/>
            <person name="Cole C.G."/>
            <person name="Collier R.E."/>
            <person name="Connor R."/>
            <person name="Conroy D."/>
            <person name="Corby N.R."/>
            <person name="Coville G.J."/>
            <person name="Cox A.V."/>
            <person name="Davis J."/>
            <person name="Dawson E."/>
            <person name="Dhami P.D."/>
            <person name="Dockree C."/>
            <person name="Dodsworth S.J."/>
            <person name="Durbin R.M."/>
            <person name="Ellington A.G."/>
            <person name="Evans K.L."/>
            <person name="Fey J.M."/>
            <person name="Fleming K."/>
            <person name="French L."/>
            <person name="Garner A.A."/>
            <person name="Gilbert J.G.R."/>
            <person name="Goward M.E."/>
            <person name="Grafham D.V."/>
            <person name="Griffiths M.N.D."/>
            <person name="Hall C."/>
            <person name="Hall R.E."/>
            <person name="Hall-Tamlyn G."/>
            <person name="Heathcott R.W."/>
            <person name="Ho S."/>
            <person name="Holmes S."/>
            <person name="Hunt S.E."/>
            <person name="Jones M.C."/>
            <person name="Kershaw J."/>
            <person name="Kimberley A.M."/>
            <person name="King A."/>
            <person name="Laird G.K."/>
            <person name="Langford C.F."/>
            <person name="Leversha M.A."/>
            <person name="Lloyd C."/>
            <person name="Lloyd D.M."/>
            <person name="Martyn I.D."/>
            <person name="Mashreghi-Mohammadi M."/>
            <person name="Matthews L.H."/>
            <person name="Mccann O.T."/>
            <person name="Mcclay J."/>
            <person name="Mclaren S."/>
            <person name="McMurray A.A."/>
            <person name="Milne S.A."/>
            <person name="Mortimore B.J."/>
            <person name="Odell C.N."/>
            <person name="Pavitt R."/>
            <person name="Pearce A.V."/>
            <person name="Pearson D."/>
            <person name="Phillimore B.J.C.T."/>
            <person name="Phillips S.H."/>
            <person name="Plumb R.W."/>
            <person name="Ramsay H."/>
            <person name="Ramsey Y."/>
            <person name="Rogers L."/>
            <person name="Ross M.T."/>
            <person name="Scott C.E."/>
            <person name="Sehra H.K."/>
            <person name="Skuce C.D."/>
            <person name="Smalley S."/>
            <person name="Smith M.L."/>
            <person name="Soderlund C."/>
            <person name="Spragon L."/>
            <person name="Steward C.A."/>
            <person name="Sulston J.E."/>
            <person name="Swann R.M."/>
            <person name="Vaudin M."/>
            <person name="Wall M."/>
            <person name="Wallis J.M."/>
            <person name="Whiteley M.N."/>
            <person name="Willey D.L."/>
            <person name="Williams L."/>
            <person name="Williams S.A."/>
            <person name="Williamson H."/>
            <person name="Wilmer T.E."/>
            <person name="Wilming L."/>
            <person name="Wright C.L."/>
            <person name="Hubbard T."/>
            <person name="Bentley D.R."/>
            <person name="Beck S."/>
            <person name="Rogers J."/>
            <person name="Shimizu N."/>
            <person name="Minoshima S."/>
            <person name="Kawasaki K."/>
            <person name="Sasaki T."/>
            <person name="Asakawa S."/>
            <person name="Kudoh J."/>
            <person name="Shintani A."/>
            <person name="Shibuya K."/>
            <person name="Yoshizaki Y."/>
            <person name="Aoki N."/>
            <person name="Mitsuyama S."/>
            <person name="Roe B.A."/>
            <person name="Chen F."/>
            <person name="Chu L."/>
            <person name="Crabtree J."/>
            <person name="Deschamps S."/>
            <person name="Do A."/>
            <person name="Do T."/>
            <person name="Dorman A."/>
            <person name="Fang F."/>
            <person name="Fu Y."/>
            <person name="Hu P."/>
            <person name="Hua A."/>
            <person name="Kenton S."/>
            <person name="Lai H."/>
            <person name="Lao H.I."/>
            <person name="Lewis J."/>
            <person name="Lewis S."/>
            <person name="Lin S.-P."/>
            <person name="Loh P."/>
            <person name="Malaj E."/>
            <person name="Nguyen T."/>
            <person name="Pan H."/>
            <person name="Phan S."/>
            <person name="Qi S."/>
            <person name="Qian Y."/>
            <person name="Ray L."/>
            <person name="Ren Q."/>
            <person name="Shaull S."/>
            <person name="Sloan D."/>
            <person name="Song L."/>
            <person name="Wang Q."/>
            <person name="Wang Y."/>
            <person name="Wang Z."/>
            <person name="White J."/>
            <person name="Willingham D."/>
            <person name="Wu H."/>
            <person name="Yao Z."/>
            <person name="Zhan M."/>
            <person name="Zhang G."/>
            <person name="Chissoe S."/>
            <person name="Murray J."/>
            <person name="Miller N."/>
            <person name="Minx P."/>
            <person name="Fulton R."/>
            <person name="Johnson D."/>
            <person name="Bemis G."/>
            <person name="Bentley D."/>
            <person name="Bradshaw H."/>
            <person name="Bourne S."/>
            <person name="Cordes M."/>
            <person name="Du Z."/>
            <person name="Fulton L."/>
            <person name="Goela D."/>
            <person name="Graves T."/>
            <person name="Hawkins J."/>
            <person name="Hinds K."/>
            <person name="Kemp K."/>
            <person name="Latreille P."/>
            <person name="Layman D."/>
            <person name="Ozersky P."/>
            <person name="Rohlfing T."/>
            <person name="Scheet P."/>
            <person name="Walker C."/>
            <person name="Wamsley A."/>
            <person name="Wohldmann P."/>
            <person name="Pepin K."/>
            <person name="Nelson J."/>
            <person name="Korf I."/>
            <person name="Bedell J.A."/>
            <person name="Hillier L.W."/>
            <person name="Mardis E."/>
            <person name="Waterston R."/>
            <person name="Wilson R."/>
            <person name="Emanuel B.S."/>
            <person name="Shaikh T."/>
            <person name="Kurahashi H."/>
            <person name="Saitta S."/>
            <person name="Budarf M.L."/>
            <person name="McDermid H.E."/>
            <person name="Johnson A."/>
            <person name="Wong A.C.C."/>
            <person name="Morrow B.E."/>
            <person name="Edelmann L."/>
            <person name="Kim U.J."/>
            <person name="Shizuya H."/>
            <person name="Simon M.I."/>
            <person name="Dumanski J.P."/>
            <person name="Peyrard M."/>
            <person name="Kedra D."/>
            <person name="Seroussi E."/>
            <person name="Fransson I."/>
            <person name="Tapia I."/>
            <person name="Bruder C.E."/>
            <person name="O'Brien K.P."/>
            <person name="Wilkinson P."/>
            <person name="Bodenteich A."/>
            <person name="Hartman K."/>
            <person name="Hu X."/>
            <person name="Khan A.S."/>
            <person name="Lane L."/>
            <person name="Tilahun Y."/>
            <person name="Wright H."/>
        </authorList>
    </citation>
    <scope>NUCLEOTIDE SEQUENCE [LARGE SCALE GENOMIC DNA]</scope>
</reference>
<reference key="7">
    <citation type="journal article" date="2004" name="Genome Res.">
        <title>The status, quality, and expansion of the NIH full-length cDNA project: the Mammalian Gene Collection (MGC).</title>
        <authorList>
            <consortium name="The MGC Project Team"/>
        </authorList>
    </citation>
    <scope>NUCLEOTIDE SEQUENCE [LARGE SCALE MRNA]</scope>
    <source>
        <tissue>Skeletal muscle</tissue>
    </source>
</reference>
<reference key="8">
    <citation type="journal article" date="1971" name="Nature New Biol.">
        <title>Primary structure of human myoglobin.</title>
        <authorList>
            <person name="Romero-Herrera A.E."/>
            <person name="Lehmann H."/>
        </authorList>
    </citation>
    <scope>PROTEIN SEQUENCE OF 2-154</scope>
</reference>
<reference key="9">
    <citation type="journal article" date="1971" name="Biochim. Biophys. Acta">
        <title>The myoglobin of primates. I. Hylobates agilis (gibbon).</title>
        <authorList>
            <person name="Romero-Herrera A.E."/>
            <person name="Lehmann H."/>
        </authorList>
    </citation>
    <scope>SEQUENCE REVISION TO 20-23 AND 84</scope>
</reference>
<reference key="10">
    <citation type="journal article" date="1972" name="Biochim. Biophys. Acta">
        <title>The myoglobin of primates. II. Pan troglodytes (chimpanzee).</title>
        <authorList>
            <person name="Romero-Herrera A.E."/>
            <person name="Lehmann H."/>
        </authorList>
    </citation>
    <scope>SEQUENCE REVISION TO 100-102</scope>
</reference>
<reference key="11">
    <citation type="journal article" date="1994" name="Electrophoresis">
        <title>The human myocardial two-dimensional gel protein database: update 1994.</title>
        <authorList>
            <person name="Corbett J.M."/>
            <person name="Wheeler C.H."/>
            <person name="Baker C.S."/>
            <person name="Yacoub M.H."/>
            <person name="Dunn M.J."/>
        </authorList>
    </citation>
    <scope>PROTEIN SEQUENCE OF 2-21</scope>
    <source>
        <tissue>Heart</tissue>
    </source>
</reference>
<reference key="12">
    <citation type="journal article" date="2020" name="Nitric Oxide">
        <title>Myoglobin promotes nitrite-dependent mitochondrial S-nitrosation to mediate cytoprotection after hypoxia/reoxygenation.</title>
        <authorList>
            <person name="Quesnelle K."/>
            <person name="Guimaraes D.A."/>
            <person name="Rao K."/>
            <person name="Singh A.B."/>
            <person name="Wang Y."/>
            <person name="Hogg N."/>
            <person name="Shiva S."/>
        </authorList>
    </citation>
    <scope>FUNCTION</scope>
    <scope>CATALYTIC ACTIVITY</scope>
</reference>
<reference evidence="23" key="13">
    <citation type="journal article" date="1990" name="J. Mol. Biol.">
        <title>X-ray crystal structure of a recombinant human myoglobin mutant at 2.8-A resolution.</title>
        <authorList>
            <person name="Hubbard S.R."/>
            <person name="Hendrickson W.A."/>
            <person name="Lambright D.G."/>
            <person name="Boxer S.G."/>
        </authorList>
    </citation>
    <scope>X-RAY CRYSTALLOGRAPHY (2.8 ANGSTROMS) OF MUTANT ARG-46 AND ALA-111 IN COMPLEX WITH HEME</scope>
</reference>
<reference key="14">
    <citation type="journal article" date="1969" name="Nature">
        <title>Abnormal human myoglobin: 53 (D4) glutamic acid--&gt;lysine.</title>
        <authorList>
            <person name="Boulton F.E."/>
            <person name="Huntsman R.G."/>
            <person name="Lorkin P.A."/>
            <person name="Lehmann H."/>
        </authorList>
    </citation>
    <scope>VARIANT LYS-55</scope>
</reference>
<reference key="15">
    <citation type="journal article" date="1971" name="Biochim. Biophys. Acta">
        <title>The third variant of human myoglobin showing an unusual amino acid substitution: 138(H16)arginine--&gt;tryptophan.</title>
        <authorList>
            <person name="Boulton F.E."/>
            <person name="Huntsman R.G."/>
            <person name="Romero Herrera A."/>
            <person name="Lorkin P.A."/>
            <person name="Lehmann H."/>
        </authorList>
    </citation>
    <scope>VARIANT TRP-140</scope>
</reference>
<reference key="16">
    <citation type="journal article" date="1971" name="Biochim. Biophys. Acta">
        <title>A human myoglobin variant 133 (H-10)lysine--&gt;asparagine.</title>
        <authorList>
            <person name="Boulton F.E."/>
            <person name="Huntsman R.G."/>
            <person name="Romero Herrera A.E."/>
            <person name="Lorkin P.A."/>
            <person name="Lehmann H."/>
        </authorList>
    </citation>
    <scope>VARIANT ASN-134</scope>
</reference>
<reference key="17">
    <citation type="journal article" date="1971" name="Br. J. Haematol.">
        <title>The second variant of human myoglobin; 138(H16) arginine leads to glutamine.</title>
        <authorList>
            <person name="Boulton F.E."/>
            <person name="Huntsman R.G."/>
            <person name="Yawson G.I."/>
            <person name="Romero-Herrera A.E."/>
            <person name="Lorkin P.A."/>
        </authorList>
    </citation>
    <scope>VARIANT GLN-140</scope>
</reference>
<reference key="18">
    <citation type="journal article" date="2019" name="Nat. Commun.">
        <title>Myoglobinopathy is an adult-onset autosomal dominant myopathy with characteristic sarcoplasmic inclusions.</title>
        <authorList>
            <person name="Olive M."/>
            <person name="Engvall M."/>
            <person name="Ravenscroft G."/>
            <person name="Cabrera-Serrano M."/>
            <person name="Jiao H."/>
            <person name="Bortolotti C.A."/>
            <person name="Pignataro M."/>
            <person name="Lambrughi M."/>
            <person name="Jiang H."/>
            <person name="Forrest A.R.R."/>
            <person name="Benseny-Cases N."/>
            <person name="Hofbauer S."/>
            <person name="Obinger C."/>
            <person name="Battistuzzi G."/>
            <person name="Bellei M."/>
            <person name="Borsari M."/>
            <person name="Di Rocco G."/>
            <person name="Viola H.M."/>
            <person name="Hool L.C."/>
            <person name="Cladera J."/>
            <person name="Lagerstedt-Robinson K."/>
            <person name="Xiang F."/>
            <person name="Wredenberg A."/>
            <person name="Miralles F."/>
            <person name="Baiges J.J."/>
            <person name="Malfatti E."/>
            <person name="Romero N.B."/>
            <person name="Streichenberger N."/>
            <person name="Vial C."/>
            <person name="Claeys K.G."/>
            <person name="Straathof C.S.M."/>
            <person name="Goris A."/>
            <person name="Freyer C."/>
            <person name="Lammens M."/>
            <person name="Bassez G."/>
            <person name="Kere J."/>
            <person name="Clemente P."/>
            <person name="Sejersen T."/>
            <person name="Udd B."/>
            <person name="Vidal N."/>
            <person name="Ferrer I."/>
            <person name="Edstroem L."/>
            <person name="Wedell A."/>
            <person name="Laing N.G."/>
        </authorList>
    </citation>
    <scope>INVOLVEMENT IN MYOSB</scope>
    <scope>VARIANT MYOSB TYR-98</scope>
    <scope>CHARACTERIZATION OF VARIANT MYOSB TYR-98</scope>
    <scope>FUNCTION</scope>
    <scope>SUBCELLULAR LOCATION</scope>
</reference>
<reference evidence="23" key="19">
    <citation type="journal article" date="2022" name="FEBS J.">
        <title>Pseudoperoxidase activity, conformational stability, and aggregation propensity of the His98Tyr myoglobin variant: implications for the onset of myoglobinopathy.</title>
        <authorList>
            <person name="Hofbauer S."/>
            <person name="Pignataro M."/>
            <person name="Borsari M."/>
            <person name="Bortolotti C.A."/>
            <person name="Di Rocco G."/>
            <person name="Ravenscroft G."/>
            <person name="Furtmueller P.G."/>
            <person name="Obinger C."/>
            <person name="Sola M."/>
            <person name="Battistuzzi G."/>
        </authorList>
    </citation>
    <scope>CHARACTERIZATION OF VARIANT MYOSB TYR-98</scope>
    <scope>FUNCTION</scope>
    <scope>CATALYTIC ACTIVITY</scope>
    <scope>BIOPHYSICOCHEMICAL PROPERTIES</scope>
</reference>
<reference key="20">
    <citation type="journal article" date="2022" name="Neuromuscul. Disord.">
        <title>Myoglobinopathy affecting facial and oropharyngeal muscles.</title>
        <authorList>
            <person name="Hama Y."/>
            <person name="Mori-Yoshimura M."/>
            <person name="Aizawa K."/>
            <person name="Oya Y."/>
            <person name="Nakamura H."/>
            <person name="Inoue M."/>
            <person name="Iida A."/>
            <person name="Sato N."/>
            <person name="Nonaka I."/>
            <person name="Nishino I."/>
            <person name="Takahashi Y."/>
        </authorList>
    </citation>
    <scope>VARIANT MYOSB TYR-98</scope>
</reference>
<feature type="initiator methionine" description="Removed" evidence="12 17">
    <location>
        <position position="1"/>
    </location>
</feature>
<feature type="chain" id="PRO_0000053303" description="Myoglobin">
    <location>
        <begin position="2"/>
        <end position="154"/>
    </location>
</feature>
<feature type="domain" description="Globin" evidence="6">
    <location>
        <begin position="2"/>
        <end position="148"/>
    </location>
</feature>
<feature type="binding site" evidence="4">
    <location>
        <position position="65"/>
    </location>
    <ligand>
        <name>nitrite</name>
        <dbReference type="ChEBI" id="CHEBI:16301"/>
    </ligand>
</feature>
<feature type="binding site" evidence="2 6">
    <location>
        <position position="65"/>
    </location>
    <ligand>
        <name>O2</name>
        <dbReference type="ChEBI" id="CHEBI:15379"/>
    </ligand>
</feature>
<feature type="binding site" description="proximal binding residue" evidence="7 23">
    <location>
        <position position="94"/>
    </location>
    <ligand>
        <name>heme b</name>
        <dbReference type="ChEBI" id="CHEBI:60344"/>
    </ligand>
    <ligandPart>
        <name>Fe</name>
        <dbReference type="ChEBI" id="CHEBI:18248"/>
    </ligandPart>
</feature>
<feature type="modified residue" description="Phosphoserine" evidence="5">
    <location>
        <position position="4"/>
    </location>
</feature>
<feature type="modified residue" description="Phosphothreonine" evidence="3">
    <location>
        <position position="68"/>
    </location>
</feature>
<feature type="sequence variant" id="VAR_003180" description="In dbSNP:rs145465287." evidence="16">
    <original>E</original>
    <variation>K</variation>
    <location>
        <position position="55"/>
    </location>
</feature>
<feature type="sequence variant" id="VAR_088618" description="In MYOSB; decreased oxygen binding; changed oxygen carrier activity; exhibits a higher tendency to form high-molecular-weight aggregates; more prone to heme bleaching." evidence="8 10 11">
    <original>H</original>
    <variation>Y</variation>
    <location>
        <position position="98"/>
    </location>
</feature>
<feature type="sequence variant" id="VAR_003181" description="In dbSNP:rs766095327." evidence="15">
    <original>K</original>
    <variation>N</variation>
    <location>
        <position position="134"/>
    </location>
</feature>
<feature type="sequence variant" id="VAR_003182" description="In dbSNP:rs142225854." evidence="13">
    <original>R</original>
    <variation>Q</variation>
    <location>
        <position position="140"/>
    </location>
</feature>
<feature type="sequence variant" id="VAR_003183" description="In dbSNP:rs767663245." evidence="14">
    <original>R</original>
    <variation>W</variation>
    <location>
        <position position="140"/>
    </location>
</feature>
<feature type="sequence conflict" description="In Ref. 5; AAX84516." evidence="19" ref="5">
    <original>E</original>
    <variation>Q</variation>
    <location>
        <position position="106"/>
    </location>
</feature>
<feature type="sequence conflict" description="In Ref. 2; AAA59595." evidence="19" ref="2">
    <original>Q</original>
    <variation>E</variation>
    <location>
        <position position="129"/>
    </location>
</feature>
<feature type="helix" evidence="24">
    <location>
        <begin position="5"/>
        <end position="18"/>
    </location>
</feature>
<feature type="helix" evidence="24">
    <location>
        <begin position="19"/>
        <end position="21"/>
    </location>
</feature>
<feature type="helix" evidence="24">
    <location>
        <begin position="22"/>
        <end position="36"/>
    </location>
</feature>
<feature type="helix" evidence="24">
    <location>
        <begin position="38"/>
        <end position="43"/>
    </location>
</feature>
<feature type="helix" evidence="24">
    <location>
        <begin position="45"/>
        <end position="47"/>
    </location>
</feature>
<feature type="helix" evidence="24">
    <location>
        <begin position="53"/>
        <end position="57"/>
    </location>
</feature>
<feature type="helix" evidence="24">
    <location>
        <begin position="60"/>
        <end position="77"/>
    </location>
</feature>
<feature type="turn" evidence="24">
    <location>
        <begin position="78"/>
        <end position="81"/>
    </location>
</feature>
<feature type="helix" evidence="24">
    <location>
        <begin position="84"/>
        <end position="96"/>
    </location>
</feature>
<feature type="helix" evidence="24">
    <location>
        <begin position="102"/>
        <end position="119"/>
    </location>
</feature>
<feature type="turn" evidence="24">
    <location>
        <begin position="121"/>
        <end position="123"/>
    </location>
</feature>
<feature type="helix" evidence="24">
    <location>
        <begin position="126"/>
        <end position="149"/>
    </location>
</feature>
<protein>
    <recommendedName>
        <fullName evidence="18">Myoglobin</fullName>
    </recommendedName>
    <alternativeName>
        <fullName evidence="20">Nitrite reductase MB</fullName>
        <ecNumber evidence="9">1.7.-.-</ecNumber>
    </alternativeName>
    <alternativeName>
        <fullName evidence="21">Pseudoperoxidase MB</fullName>
        <ecNumber evidence="10">1.11.1.-</ecNumber>
    </alternativeName>
</protein>
<dbReference type="EC" id="1.7.-.-" evidence="9"/>
<dbReference type="EC" id="1.11.1.-" evidence="10"/>
<dbReference type="EMBL" id="X00371">
    <property type="protein sequence ID" value="CAA25109.1"/>
    <property type="molecule type" value="Genomic_DNA"/>
</dbReference>
<dbReference type="EMBL" id="X00372">
    <property type="protein sequence ID" value="CAA25109.1"/>
    <property type="status" value="JOINED"/>
    <property type="molecule type" value="Genomic_DNA"/>
</dbReference>
<dbReference type="EMBL" id="X00373">
    <property type="protein sequence ID" value="CAA25109.1"/>
    <property type="status" value="JOINED"/>
    <property type="molecule type" value="Genomic_DNA"/>
</dbReference>
<dbReference type="EMBL" id="M14603">
    <property type="protein sequence ID" value="AAA59595.1"/>
    <property type="molecule type" value="Genomic_DNA"/>
</dbReference>
<dbReference type="EMBL" id="M10090">
    <property type="protein sequence ID" value="AAA59595.1"/>
    <property type="status" value="JOINED"/>
    <property type="molecule type" value="Genomic_DNA"/>
</dbReference>
<dbReference type="EMBL" id="M14602">
    <property type="protein sequence ID" value="AAA59595.1"/>
    <property type="status" value="JOINED"/>
    <property type="molecule type" value="Genomic_DNA"/>
</dbReference>
<dbReference type="EMBL" id="CR456516">
    <property type="protein sequence ID" value="CAG30402.1"/>
    <property type="molecule type" value="mRNA"/>
</dbReference>
<dbReference type="EMBL" id="CR541949">
    <property type="protein sequence ID" value="CAG46747.1"/>
    <property type="molecule type" value="mRNA"/>
</dbReference>
<dbReference type="EMBL" id="DQ003030">
    <property type="protein sequence ID" value="AAX84516.1"/>
    <property type="molecule type" value="Genomic_DNA"/>
</dbReference>
<dbReference type="EMBL" id="AL022334">
    <property type="protein sequence ID" value="CAI21837.1"/>
    <property type="molecule type" value="Genomic_DNA"/>
</dbReference>
<dbReference type="EMBL" id="AL049747">
    <property type="protein sequence ID" value="CAI21837.1"/>
    <property type="status" value="JOINED"/>
    <property type="molecule type" value="Genomic_DNA"/>
</dbReference>
<dbReference type="EMBL" id="BC014547">
    <property type="protein sequence ID" value="AAH14547.1"/>
    <property type="molecule type" value="mRNA"/>
</dbReference>
<dbReference type="CCDS" id="CCDS13917.1"/>
<dbReference type="PIR" id="I53991">
    <property type="entry name" value="MYHU"/>
</dbReference>
<dbReference type="RefSeq" id="NP_001349775.1">
    <property type="nucleotide sequence ID" value="NM_001362846.2"/>
</dbReference>
<dbReference type="RefSeq" id="NP_001369738.1">
    <property type="nucleotide sequence ID" value="NM_001382809.1"/>
</dbReference>
<dbReference type="RefSeq" id="NP_001369739.1">
    <property type="nucleotide sequence ID" value="NM_001382810.1"/>
</dbReference>
<dbReference type="RefSeq" id="NP_001369740.1">
    <property type="nucleotide sequence ID" value="NM_001382811.1"/>
</dbReference>
<dbReference type="RefSeq" id="NP_005359.1">
    <property type="nucleotide sequence ID" value="NM_005368.3"/>
</dbReference>
<dbReference type="RefSeq" id="NP_976311.1">
    <property type="nucleotide sequence ID" value="NM_203377.1"/>
</dbReference>
<dbReference type="RefSeq" id="NP_976312.1">
    <property type="nucleotide sequence ID" value="NM_203378.1"/>
</dbReference>
<dbReference type="RefSeq" id="XP_005261662.1">
    <property type="nucleotide sequence ID" value="XM_005261605.2"/>
</dbReference>
<dbReference type="PDB" id="3RGK">
    <property type="method" value="X-ray"/>
    <property type="resolution" value="1.65 A"/>
    <property type="chains" value="A=2-154"/>
</dbReference>
<dbReference type="PDBsum" id="3RGK"/>
<dbReference type="SMR" id="P02144"/>
<dbReference type="BioGRID" id="110321">
    <property type="interactions" value="17"/>
</dbReference>
<dbReference type="FunCoup" id="P02144">
    <property type="interactions" value="163"/>
</dbReference>
<dbReference type="IntAct" id="P02144">
    <property type="interactions" value="7"/>
</dbReference>
<dbReference type="STRING" id="9606.ENSP00000352835"/>
<dbReference type="BindingDB" id="P02144"/>
<dbReference type="ChEMBL" id="CHEMBL2406892"/>
<dbReference type="DrugBank" id="DB02671">
    <property type="generic name" value="1-Methylimidazole"/>
</dbReference>
<dbReference type="DrugBank" id="DB03385">
    <property type="generic name" value="4-Methylimidazole"/>
</dbReference>
<dbReference type="DrugBank" id="DB02379">
    <property type="generic name" value="Beta-D-Glucose"/>
</dbReference>
<dbReference type="DrugBank" id="DB02073">
    <property type="generic name" value="Biliverdine IX Alpha"/>
</dbReference>
<dbReference type="DrugBank" id="DB11588">
    <property type="generic name" value="Carbon monoxide"/>
</dbReference>
<dbReference type="DrugBank" id="DB03399">
    <property type="generic name" value="Ethyl Isocyanide"/>
</dbReference>
<dbReference type="DrugBank" id="DB03366">
    <property type="generic name" value="Imidazole"/>
</dbReference>
<dbReference type="DrugBank" id="DB04337">
    <property type="generic name" value="Isocyanomethane"/>
</dbReference>
<dbReference type="DrugBank" id="DB02396">
    <property type="generic name" value="Methylethylamine"/>
</dbReference>
<dbReference type="DrugBank" id="DB01826">
    <property type="generic name" value="N-Butyl Isocyanide"/>
</dbReference>
<dbReference type="DrugBank" id="DB04050">
    <property type="generic name" value="N-Propyl Isocyanide"/>
</dbReference>
<dbReference type="DrugBank" id="DB02646">
    <property type="generic name" value="Nitrosoethane"/>
</dbReference>
<dbReference type="DrugBank" id="DB09112">
    <property type="generic name" value="Nitrous acid"/>
</dbReference>
<dbReference type="DrugBank" id="DB01710">
    <property type="generic name" value="Porphyrin Fe(III)"/>
</dbReference>
<dbReference type="DrugBank" id="DB02528">
    <property type="generic name" value="Tetrazolyl Histidine"/>
</dbReference>
<dbReference type="DrugCentral" id="P02144"/>
<dbReference type="TCDB" id="1.A.107.1.3">
    <property type="family name" value="the pore-forming globin (globin) family"/>
</dbReference>
<dbReference type="CarbonylDB" id="P02144"/>
<dbReference type="iPTMnet" id="P02144"/>
<dbReference type="PhosphoSitePlus" id="P02144"/>
<dbReference type="BioMuta" id="MB"/>
<dbReference type="DMDM" id="127661"/>
<dbReference type="jPOST" id="P02144"/>
<dbReference type="MassIVE" id="P02144"/>
<dbReference type="PaxDb" id="9606-ENSP00000380489"/>
<dbReference type="PeptideAtlas" id="P02144"/>
<dbReference type="ProteomicsDB" id="51517"/>
<dbReference type="ABCD" id="P02144">
    <property type="antibodies" value="1 sequenced antibody"/>
</dbReference>
<dbReference type="Antibodypedia" id="292">
    <property type="antibodies" value="1348 antibodies from 47 providers"/>
</dbReference>
<dbReference type="DNASU" id="4151"/>
<dbReference type="Ensembl" id="ENST00000359787.5">
    <property type="protein sequence ID" value="ENSP00000352835.1"/>
    <property type="gene ID" value="ENSG00000198125.13"/>
</dbReference>
<dbReference type="Ensembl" id="ENST00000397326.7">
    <property type="protein sequence ID" value="ENSP00000380489.2"/>
    <property type="gene ID" value="ENSG00000198125.13"/>
</dbReference>
<dbReference type="Ensembl" id="ENST00000397328.5">
    <property type="protein sequence ID" value="ENSP00000380491.1"/>
    <property type="gene ID" value="ENSG00000198125.13"/>
</dbReference>
<dbReference type="Ensembl" id="ENST00000406324.5">
    <property type="protein sequence ID" value="ENSP00000384239.1"/>
    <property type="gene ID" value="ENSG00000198125.13"/>
</dbReference>
<dbReference type="GeneID" id="4151"/>
<dbReference type="KEGG" id="hsa:4151"/>
<dbReference type="MANE-Select" id="ENST00000397326.7">
    <property type="protein sequence ID" value="ENSP00000380489.2"/>
    <property type="RefSeq nucleotide sequence ID" value="NM_005368.3"/>
    <property type="RefSeq protein sequence ID" value="NP_005359.1"/>
</dbReference>
<dbReference type="UCSC" id="uc003anz.4">
    <property type="organism name" value="human"/>
</dbReference>
<dbReference type="AGR" id="HGNC:6915"/>
<dbReference type="CTD" id="4151"/>
<dbReference type="DisGeNET" id="4151"/>
<dbReference type="GeneCards" id="MB"/>
<dbReference type="HGNC" id="HGNC:6915">
    <property type="gene designation" value="MB"/>
</dbReference>
<dbReference type="HPA" id="ENSG00000198125">
    <property type="expression patterns" value="Group enriched (heart muscle, skeletal muscle, tongue)"/>
</dbReference>
<dbReference type="MalaCards" id="MB"/>
<dbReference type="MIM" id="160000">
    <property type="type" value="gene"/>
</dbReference>
<dbReference type="MIM" id="620286">
    <property type="type" value="phenotype"/>
</dbReference>
<dbReference type="neXtProt" id="NX_P02144"/>
<dbReference type="OpenTargets" id="ENSG00000198125"/>
<dbReference type="PharmGKB" id="PA30658"/>
<dbReference type="VEuPathDB" id="HostDB:ENSG00000198125"/>
<dbReference type="eggNOG" id="KOG3378">
    <property type="taxonomic scope" value="Eukaryota"/>
</dbReference>
<dbReference type="GeneTree" id="ENSGT00940000160809"/>
<dbReference type="InParanoid" id="P02144"/>
<dbReference type="OMA" id="VIIRMFQ"/>
<dbReference type="OrthoDB" id="6344802at2759"/>
<dbReference type="PAN-GO" id="P02144">
    <property type="GO annotations" value="2 GO annotations based on evolutionary models"/>
</dbReference>
<dbReference type="PhylomeDB" id="P02144"/>
<dbReference type="TreeFam" id="TF332967"/>
<dbReference type="PathwayCommons" id="P02144"/>
<dbReference type="Reactome" id="R-HSA-8981607">
    <property type="pathway name" value="Intracellular oxygen transport"/>
</dbReference>
<dbReference type="SignaLink" id="P02144"/>
<dbReference type="BioGRID-ORCS" id="4151">
    <property type="hits" value="10 hits in 1149 CRISPR screens"/>
</dbReference>
<dbReference type="ChiTaRS" id="MB">
    <property type="organism name" value="human"/>
</dbReference>
<dbReference type="EvolutionaryTrace" id="P02144"/>
<dbReference type="GeneWiki" id="Myoglobin"/>
<dbReference type="GenomeRNAi" id="4151"/>
<dbReference type="Pharos" id="P02144">
    <property type="development level" value="Tbio"/>
</dbReference>
<dbReference type="PRO" id="PR:P02144"/>
<dbReference type="Proteomes" id="UP000005640">
    <property type="component" value="Chromosome 22"/>
</dbReference>
<dbReference type="RNAct" id="P02144">
    <property type="molecule type" value="protein"/>
</dbReference>
<dbReference type="Bgee" id="ENSG00000198125">
    <property type="expression patterns" value="Expressed in heart right ventricle and 141 other cell types or tissues"/>
</dbReference>
<dbReference type="ExpressionAtlas" id="P02144">
    <property type="expression patterns" value="baseline and differential"/>
</dbReference>
<dbReference type="GO" id="GO:0005829">
    <property type="term" value="C:cytosol"/>
    <property type="evidence" value="ECO:0000304"/>
    <property type="project" value="Reactome"/>
</dbReference>
<dbReference type="GO" id="GO:0070062">
    <property type="term" value="C:extracellular exosome"/>
    <property type="evidence" value="ECO:0007005"/>
    <property type="project" value="UniProtKB"/>
</dbReference>
<dbReference type="GO" id="GO:0016528">
    <property type="term" value="C:sarcoplasm"/>
    <property type="evidence" value="ECO:0000314"/>
    <property type="project" value="UniProtKB"/>
</dbReference>
<dbReference type="GO" id="GO:0020037">
    <property type="term" value="F:heme binding"/>
    <property type="evidence" value="ECO:0007669"/>
    <property type="project" value="InterPro"/>
</dbReference>
<dbReference type="GO" id="GO:0046872">
    <property type="term" value="F:metal ion binding"/>
    <property type="evidence" value="ECO:0007669"/>
    <property type="project" value="UniProtKB-KW"/>
</dbReference>
<dbReference type="GO" id="GO:0098809">
    <property type="term" value="F:nitrite reductase activity"/>
    <property type="evidence" value="ECO:0000314"/>
    <property type="project" value="UniProtKB"/>
</dbReference>
<dbReference type="GO" id="GO:0019825">
    <property type="term" value="F:oxygen binding"/>
    <property type="evidence" value="ECO:0000318"/>
    <property type="project" value="GO_Central"/>
</dbReference>
<dbReference type="GO" id="GO:0005344">
    <property type="term" value="F:oxygen carrier activity"/>
    <property type="evidence" value="ECO:0000315"/>
    <property type="project" value="UniProtKB"/>
</dbReference>
<dbReference type="GO" id="GO:0004601">
    <property type="term" value="F:peroxidase activity"/>
    <property type="evidence" value="ECO:0000314"/>
    <property type="project" value="UniProtKB"/>
</dbReference>
<dbReference type="GO" id="GO:0050873">
    <property type="term" value="P:brown fat cell differentiation"/>
    <property type="evidence" value="ECO:0007669"/>
    <property type="project" value="Ensembl"/>
</dbReference>
<dbReference type="GO" id="GO:0043353">
    <property type="term" value="P:enucleate erythrocyte differentiation"/>
    <property type="evidence" value="ECO:0007669"/>
    <property type="project" value="Ensembl"/>
</dbReference>
<dbReference type="GO" id="GO:0007507">
    <property type="term" value="P:heart development"/>
    <property type="evidence" value="ECO:0007669"/>
    <property type="project" value="Ensembl"/>
</dbReference>
<dbReference type="GO" id="GO:0015671">
    <property type="term" value="P:oxygen transport"/>
    <property type="evidence" value="ECO:0000318"/>
    <property type="project" value="GO_Central"/>
</dbReference>
<dbReference type="GO" id="GO:0019430">
    <property type="term" value="P:removal of superoxide radicals"/>
    <property type="evidence" value="ECO:0000314"/>
    <property type="project" value="UniProtKB"/>
</dbReference>
<dbReference type="GO" id="GO:0001666">
    <property type="term" value="P:response to hypoxia"/>
    <property type="evidence" value="ECO:0007669"/>
    <property type="project" value="Ensembl"/>
</dbReference>
<dbReference type="CDD" id="cd08926">
    <property type="entry name" value="Mb"/>
    <property type="match status" value="1"/>
</dbReference>
<dbReference type="Gene3D" id="6.10.140.2100">
    <property type="match status" value="1"/>
</dbReference>
<dbReference type="Gene3D" id="6.10.140.2110">
    <property type="match status" value="1"/>
</dbReference>
<dbReference type="InterPro" id="IPR000971">
    <property type="entry name" value="Globin"/>
</dbReference>
<dbReference type="InterPro" id="IPR009050">
    <property type="entry name" value="Globin-like_sf"/>
</dbReference>
<dbReference type="InterPro" id="IPR002335">
    <property type="entry name" value="Myoglobin"/>
</dbReference>
<dbReference type="PANTHER" id="PTHR47132">
    <property type="entry name" value="MYOGLOBIN"/>
    <property type="match status" value="1"/>
</dbReference>
<dbReference type="PANTHER" id="PTHR47132:SF1">
    <property type="entry name" value="MYOGLOBIN"/>
    <property type="match status" value="1"/>
</dbReference>
<dbReference type="Pfam" id="PF00042">
    <property type="entry name" value="Globin"/>
    <property type="match status" value="1"/>
</dbReference>
<dbReference type="PRINTS" id="PR00613">
    <property type="entry name" value="MYOGLOBIN"/>
</dbReference>
<dbReference type="SUPFAM" id="SSF46458">
    <property type="entry name" value="Globin-like"/>
    <property type="match status" value="1"/>
</dbReference>
<dbReference type="PROSITE" id="PS01033">
    <property type="entry name" value="GLOBIN"/>
    <property type="match status" value="1"/>
</dbReference>
<accession>P02144</accession>
<accession>Q52H51</accession>
<accession>Q5THY7</accession>
<proteinExistence type="evidence at protein level"/>
<name>MYG_HUMAN</name>
<keyword id="KW-0002">3D-structure</keyword>
<keyword id="KW-0963">Cytoplasm</keyword>
<keyword id="KW-0903">Direct protein sequencing</keyword>
<keyword id="KW-0225">Disease variant</keyword>
<keyword id="KW-0349">Heme</keyword>
<keyword id="KW-0408">Iron</keyword>
<keyword id="KW-0479">Metal-binding</keyword>
<keyword id="KW-0514">Muscle protein</keyword>
<keyword id="KW-0560">Oxidoreductase</keyword>
<keyword id="KW-0561">Oxygen transport</keyword>
<keyword id="KW-0597">Phosphoprotein</keyword>
<keyword id="KW-1267">Proteomics identification</keyword>
<keyword id="KW-1185">Reference proteome</keyword>
<keyword id="KW-0813">Transport</keyword>
<organism>
    <name type="scientific">Homo sapiens</name>
    <name type="common">Human</name>
    <dbReference type="NCBI Taxonomy" id="9606"/>
    <lineage>
        <taxon>Eukaryota</taxon>
        <taxon>Metazoa</taxon>
        <taxon>Chordata</taxon>
        <taxon>Craniata</taxon>
        <taxon>Vertebrata</taxon>
        <taxon>Euteleostomi</taxon>
        <taxon>Mammalia</taxon>
        <taxon>Eutheria</taxon>
        <taxon>Euarchontoglires</taxon>
        <taxon>Primates</taxon>
        <taxon>Haplorrhini</taxon>
        <taxon>Catarrhini</taxon>
        <taxon>Hominidae</taxon>
        <taxon>Homo</taxon>
    </lineage>
</organism>